<proteinExistence type="inferred from homology"/>
<keyword id="KW-0005">Acetoin biosynthesis</keyword>
<keyword id="KW-0210">Decarboxylase</keyword>
<keyword id="KW-0456">Lyase</keyword>
<keyword id="KW-1185">Reference proteome</keyword>
<organism>
    <name type="scientific">Methylococcus capsulatus (strain ATCC 33009 / NCIMB 11132 / Bath)</name>
    <dbReference type="NCBI Taxonomy" id="243233"/>
    <lineage>
        <taxon>Bacteria</taxon>
        <taxon>Pseudomonadati</taxon>
        <taxon>Pseudomonadota</taxon>
        <taxon>Gammaproteobacteria</taxon>
        <taxon>Methylococcales</taxon>
        <taxon>Methylococcaceae</taxon>
        <taxon>Methylococcus</taxon>
    </lineage>
</organism>
<accession>Q607C3</accession>
<reference key="1">
    <citation type="journal article" date="2004" name="PLoS Biol.">
        <title>Genomic insights into methanotrophy: the complete genome sequence of Methylococcus capsulatus (Bath).</title>
        <authorList>
            <person name="Ward N.L."/>
            <person name="Larsen O."/>
            <person name="Sakwa J."/>
            <person name="Bruseth L."/>
            <person name="Khouri H.M."/>
            <person name="Durkin A.S."/>
            <person name="Dimitrov G."/>
            <person name="Jiang L."/>
            <person name="Scanlan D."/>
            <person name="Kang K.H."/>
            <person name="Lewis M.R."/>
            <person name="Nelson K.E."/>
            <person name="Methe B.A."/>
            <person name="Wu M."/>
            <person name="Heidelberg J.F."/>
            <person name="Paulsen I.T."/>
            <person name="Fouts D.E."/>
            <person name="Ravel J."/>
            <person name="Tettelin H."/>
            <person name="Ren Q."/>
            <person name="Read T.D."/>
            <person name="DeBoy R.T."/>
            <person name="Seshadri R."/>
            <person name="Salzberg S.L."/>
            <person name="Jensen H.B."/>
            <person name="Birkeland N.K."/>
            <person name="Nelson W.C."/>
            <person name="Dodson R.J."/>
            <person name="Grindhaug S.H."/>
            <person name="Holt I.E."/>
            <person name="Eidhammer I."/>
            <person name="Jonasen I."/>
            <person name="Vanaken S."/>
            <person name="Utterback T.R."/>
            <person name="Feldblyum T.V."/>
            <person name="Fraser C.M."/>
            <person name="Lillehaug J.R."/>
            <person name="Eisen J.A."/>
        </authorList>
    </citation>
    <scope>NUCLEOTIDE SEQUENCE [LARGE SCALE GENOMIC DNA]</scope>
    <source>
        <strain>ATCC 33009 / NCIMB 11132 / Bath</strain>
    </source>
</reference>
<protein>
    <recommendedName>
        <fullName>Alpha-acetolactate decarboxylase</fullName>
        <ecNumber>4.1.1.5</ecNumber>
    </recommendedName>
</protein>
<dbReference type="EC" id="4.1.1.5"/>
<dbReference type="EMBL" id="AE017282">
    <property type="protein sequence ID" value="AAU91940.1"/>
    <property type="molecule type" value="Genomic_DNA"/>
</dbReference>
<dbReference type="RefSeq" id="WP_010961090.1">
    <property type="nucleotide sequence ID" value="NC_002977.6"/>
</dbReference>
<dbReference type="SMR" id="Q607C3"/>
<dbReference type="STRING" id="243233.MCA1838"/>
<dbReference type="GeneID" id="88224084"/>
<dbReference type="KEGG" id="mca:MCA1838"/>
<dbReference type="eggNOG" id="COG3527">
    <property type="taxonomic scope" value="Bacteria"/>
</dbReference>
<dbReference type="HOGENOM" id="CLU_072561_0_0_6"/>
<dbReference type="UniPathway" id="UPA00626">
    <property type="reaction ID" value="UER00678"/>
</dbReference>
<dbReference type="Proteomes" id="UP000006821">
    <property type="component" value="Chromosome"/>
</dbReference>
<dbReference type="GO" id="GO:0047605">
    <property type="term" value="F:acetolactate decarboxylase activity"/>
    <property type="evidence" value="ECO:0007669"/>
    <property type="project" value="UniProtKB-EC"/>
</dbReference>
<dbReference type="GO" id="GO:0045151">
    <property type="term" value="P:acetoin biosynthetic process"/>
    <property type="evidence" value="ECO:0007669"/>
    <property type="project" value="UniProtKB-KW"/>
</dbReference>
<dbReference type="CDD" id="cd17299">
    <property type="entry name" value="acetolactate_decarboxylase"/>
    <property type="match status" value="1"/>
</dbReference>
<dbReference type="Gene3D" id="3.30.1330.80">
    <property type="entry name" value="Hypothetical protein, similar to alpha- acetolactate decarboxylase, domain 2"/>
    <property type="match status" value="2"/>
</dbReference>
<dbReference type="InterPro" id="IPR005128">
    <property type="entry name" value="Acetolactate_a_deCO2ase"/>
</dbReference>
<dbReference type="NCBIfam" id="TIGR01252">
    <property type="entry name" value="acetolac_decarb"/>
    <property type="match status" value="1"/>
</dbReference>
<dbReference type="PANTHER" id="PTHR35524">
    <property type="entry name" value="ALPHA-ACETOLACTATE DECARBOXYLASE"/>
    <property type="match status" value="1"/>
</dbReference>
<dbReference type="PANTHER" id="PTHR35524:SF1">
    <property type="entry name" value="ALPHA-ACETOLACTATE DECARBOXYLASE"/>
    <property type="match status" value="1"/>
</dbReference>
<dbReference type="Pfam" id="PF03306">
    <property type="entry name" value="AAL_decarboxy"/>
    <property type="match status" value="1"/>
</dbReference>
<dbReference type="PIRSF" id="PIRSF001332">
    <property type="entry name" value="Acetolac_decarb"/>
    <property type="match status" value="1"/>
</dbReference>
<dbReference type="SUPFAM" id="SSF117856">
    <property type="entry name" value="AF0104/ALDC/Ptd012-like"/>
    <property type="match status" value="1"/>
</dbReference>
<evidence type="ECO:0000250" key="1"/>
<evidence type="ECO:0000305" key="2"/>
<name>ALDC_METCA</name>
<gene>
    <name type="primary">budA</name>
    <name type="ordered locus">MCA1838</name>
</gene>
<sequence length="260" mass="29184">MAIDDIFIQAFRTHQQKGDLFHPLGHEDHEVFQSSTIGALMEGVYDGDTTYGELARHGDFGLGTFNALDGEMIALGGRFFQIKSDGKAYPVPPTAKTPFAVVTLFDPTVQVVWPDPIDWKQFQAAVDKAVPSKNVFYAIRVRACFDHIRVRTVPRQRKPYPPLVEVARRQPEFEYGHLEGTLVGFRFPDYTQGVNVAGYHVHFLDKAETLGGHVLDFSMRNAVVDIDVTSQFRMEVPECGAFLDADLARNQDEAIHEAEN</sequence>
<comment type="function">
    <text evidence="1">Converts acetolactate into acetoin.</text>
</comment>
<comment type="catalytic activity">
    <reaction>
        <text>(2S)-2-acetolactate + H(+) = (R)-acetoin + CO2</text>
        <dbReference type="Rhea" id="RHEA:21580"/>
        <dbReference type="ChEBI" id="CHEBI:15378"/>
        <dbReference type="ChEBI" id="CHEBI:15686"/>
        <dbReference type="ChEBI" id="CHEBI:16526"/>
        <dbReference type="ChEBI" id="CHEBI:58476"/>
        <dbReference type="EC" id="4.1.1.5"/>
    </reaction>
</comment>
<comment type="pathway">
    <text>Polyol metabolism; (R,R)-butane-2,3-diol biosynthesis; (R,R)-butane-2,3-diol from pyruvate: step 2/3.</text>
</comment>
<comment type="similarity">
    <text evidence="2">Belongs to the alpha-acetolactate decarboxylase family.</text>
</comment>
<feature type="chain" id="PRO_0000403435" description="Alpha-acetolactate decarboxylase">
    <location>
        <begin position="1"/>
        <end position="260"/>
    </location>
</feature>